<feature type="chain" id="PRO_0000357263" description="Methylthioribose-1-phosphate isomerase">
    <location>
        <begin position="1"/>
        <end position="343"/>
    </location>
</feature>
<feature type="active site" description="Proton donor" evidence="1">
    <location>
        <position position="234"/>
    </location>
</feature>
<feature type="binding site" evidence="1">
    <location>
        <begin position="48"/>
        <end position="50"/>
    </location>
    <ligand>
        <name>substrate</name>
    </ligand>
</feature>
<feature type="binding site" evidence="1">
    <location>
        <position position="88"/>
    </location>
    <ligand>
        <name>substrate</name>
    </ligand>
</feature>
<feature type="binding site" evidence="1">
    <location>
        <position position="193"/>
    </location>
    <ligand>
        <name>substrate</name>
    </ligand>
</feature>
<feature type="binding site" evidence="1">
    <location>
        <begin position="244"/>
        <end position="245"/>
    </location>
    <ligand>
        <name>substrate</name>
    </ligand>
</feature>
<feature type="site" description="Transition state stabilizer" evidence="1">
    <location>
        <position position="154"/>
    </location>
</feature>
<protein>
    <recommendedName>
        <fullName evidence="1">Methylthioribose-1-phosphate isomerase</fullName>
        <shortName evidence="1">M1Pi</shortName>
        <shortName evidence="1">MTR-1-P isomerase</shortName>
        <ecNumber evidence="1">5.3.1.23</ecNumber>
    </recommendedName>
    <alternativeName>
        <fullName evidence="1">S-methyl-5-thioribose-1-phosphate isomerase</fullName>
    </alternativeName>
</protein>
<gene>
    <name evidence="1" type="primary">mtnA</name>
    <name type="ordered locus">TRQ2_0016</name>
</gene>
<dbReference type="EC" id="5.3.1.23" evidence="1"/>
<dbReference type="EMBL" id="CP000969">
    <property type="protein sequence ID" value="ACB08378.1"/>
    <property type="molecule type" value="Genomic_DNA"/>
</dbReference>
<dbReference type="RefSeq" id="WP_011942723.1">
    <property type="nucleotide sequence ID" value="NC_010483.1"/>
</dbReference>
<dbReference type="SMR" id="B1LC23"/>
<dbReference type="KEGG" id="trq:TRQ2_0016"/>
<dbReference type="HOGENOM" id="CLU_016218_1_2_0"/>
<dbReference type="UniPathway" id="UPA00904">
    <property type="reaction ID" value="UER00874"/>
</dbReference>
<dbReference type="Proteomes" id="UP000001687">
    <property type="component" value="Chromosome"/>
</dbReference>
<dbReference type="GO" id="GO:0046523">
    <property type="term" value="F:S-methyl-5-thioribose-1-phosphate isomerase activity"/>
    <property type="evidence" value="ECO:0007669"/>
    <property type="project" value="UniProtKB-UniRule"/>
</dbReference>
<dbReference type="GO" id="GO:0019509">
    <property type="term" value="P:L-methionine salvage from methylthioadenosine"/>
    <property type="evidence" value="ECO:0007669"/>
    <property type="project" value="UniProtKB-UniRule"/>
</dbReference>
<dbReference type="FunFam" id="1.20.120.420:FF:000003">
    <property type="entry name" value="Methylthioribose-1-phosphate isomerase"/>
    <property type="match status" value="1"/>
</dbReference>
<dbReference type="FunFam" id="3.40.50.10470:FF:000010">
    <property type="entry name" value="Methylthioribose-1-phosphate isomerase"/>
    <property type="match status" value="1"/>
</dbReference>
<dbReference type="Gene3D" id="1.20.120.420">
    <property type="entry name" value="translation initiation factor eif-2b, domain 1"/>
    <property type="match status" value="1"/>
</dbReference>
<dbReference type="Gene3D" id="3.40.50.10470">
    <property type="entry name" value="Translation initiation factor eif-2b, domain 2"/>
    <property type="match status" value="1"/>
</dbReference>
<dbReference type="HAMAP" id="MF_01678">
    <property type="entry name" value="Salvage_MtnA"/>
    <property type="match status" value="1"/>
</dbReference>
<dbReference type="InterPro" id="IPR000649">
    <property type="entry name" value="IF-2B-related"/>
</dbReference>
<dbReference type="InterPro" id="IPR005251">
    <property type="entry name" value="IF-M1Pi"/>
</dbReference>
<dbReference type="InterPro" id="IPR042529">
    <property type="entry name" value="IF_2B-like_C"/>
</dbReference>
<dbReference type="InterPro" id="IPR011559">
    <property type="entry name" value="Initiation_fac_2B_a/b/d"/>
</dbReference>
<dbReference type="InterPro" id="IPR027363">
    <property type="entry name" value="M1Pi_N"/>
</dbReference>
<dbReference type="InterPro" id="IPR037171">
    <property type="entry name" value="NagB/RpiA_transferase-like"/>
</dbReference>
<dbReference type="NCBIfam" id="TIGR00524">
    <property type="entry name" value="eIF-2B_rel"/>
    <property type="match status" value="1"/>
</dbReference>
<dbReference type="NCBIfam" id="NF004326">
    <property type="entry name" value="PRK05720.1"/>
    <property type="match status" value="1"/>
</dbReference>
<dbReference type="NCBIfam" id="TIGR00512">
    <property type="entry name" value="salvage_mtnA"/>
    <property type="match status" value="1"/>
</dbReference>
<dbReference type="PANTHER" id="PTHR43475">
    <property type="entry name" value="METHYLTHIORIBOSE-1-PHOSPHATE ISOMERASE"/>
    <property type="match status" value="1"/>
</dbReference>
<dbReference type="PANTHER" id="PTHR43475:SF1">
    <property type="entry name" value="METHYLTHIORIBOSE-1-PHOSPHATE ISOMERASE"/>
    <property type="match status" value="1"/>
</dbReference>
<dbReference type="Pfam" id="PF01008">
    <property type="entry name" value="IF-2B"/>
    <property type="match status" value="1"/>
</dbReference>
<dbReference type="SUPFAM" id="SSF100950">
    <property type="entry name" value="NagB/RpiA/CoA transferase-like"/>
    <property type="match status" value="1"/>
</dbReference>
<organism>
    <name type="scientific">Thermotoga sp. (strain RQ2)</name>
    <dbReference type="NCBI Taxonomy" id="126740"/>
    <lineage>
        <taxon>Bacteria</taxon>
        <taxon>Thermotogati</taxon>
        <taxon>Thermotogota</taxon>
        <taxon>Thermotogae</taxon>
        <taxon>Thermotogales</taxon>
        <taxon>Thermotogaceae</taxon>
        <taxon>Thermotoga</taxon>
    </lineage>
</organism>
<name>MTNA_THESQ</name>
<evidence type="ECO:0000255" key="1">
    <source>
        <dbReference type="HAMAP-Rule" id="MF_01678"/>
    </source>
</evidence>
<evidence type="ECO:0000305" key="2"/>
<proteinExistence type="inferred from homology"/>
<keyword id="KW-0028">Amino-acid biosynthesis</keyword>
<keyword id="KW-0413">Isomerase</keyword>
<keyword id="KW-0486">Methionine biosynthesis</keyword>
<accession>B1LC23</accession>
<comment type="function">
    <text evidence="1">Catalyzes the interconversion of methylthioribose-1-phosphate (MTR-1-P) into methylthioribulose-1-phosphate (MTRu-1-P).</text>
</comment>
<comment type="catalytic activity">
    <reaction evidence="1">
        <text>5-(methylsulfanyl)-alpha-D-ribose 1-phosphate = 5-(methylsulfanyl)-D-ribulose 1-phosphate</text>
        <dbReference type="Rhea" id="RHEA:19989"/>
        <dbReference type="ChEBI" id="CHEBI:58533"/>
        <dbReference type="ChEBI" id="CHEBI:58548"/>
        <dbReference type="EC" id="5.3.1.23"/>
    </reaction>
</comment>
<comment type="pathway">
    <text evidence="1">Amino-acid biosynthesis; L-methionine biosynthesis via salvage pathway; L-methionine from S-methyl-5-thio-alpha-D-ribose 1-phosphate: step 1/6.</text>
</comment>
<comment type="similarity">
    <text evidence="2">Belongs to the eIF-2B alpha/beta/delta subunits family. MtnA subfamily.</text>
</comment>
<reference key="1">
    <citation type="journal article" date="2011" name="J. Bacteriol.">
        <title>Genome sequence of Thermotoga sp. strain RQ2, a hyperthermophilic bacterium isolated from a geothermally heated region of the seafloor near Ribeira Quente, the Azores.</title>
        <authorList>
            <person name="Swithers K.S."/>
            <person name="DiPippo J.L."/>
            <person name="Bruce D.C."/>
            <person name="Detter C."/>
            <person name="Tapia R."/>
            <person name="Han S."/>
            <person name="Saunders E."/>
            <person name="Goodwin L.A."/>
            <person name="Han J."/>
            <person name="Woyke T."/>
            <person name="Pitluck S."/>
            <person name="Pennacchio L."/>
            <person name="Nolan M."/>
            <person name="Mikhailova N."/>
            <person name="Lykidis A."/>
            <person name="Land M.L."/>
            <person name="Brettin T."/>
            <person name="Stetter K.O."/>
            <person name="Nelson K.E."/>
            <person name="Gogarten J.P."/>
            <person name="Noll K.M."/>
        </authorList>
    </citation>
    <scope>NUCLEOTIDE SEQUENCE [LARGE SCALE GENOMIC DNA]</scope>
    <source>
        <strain>RQ2</strain>
    </source>
</reference>
<sequence>MKLKTKTMEWSGDSLKLLDQRKLPFIEEYVECKTHEEVAHAIKEMIVRGAPAIGVTAAFGYVLGLRDYKTGSLTDWMKQVKETLARTRPTAVNLFWALNRMEKVFFENVDRENLFEILENEALKMAYEDIEVNKAIGKNGAQLIKDGSTILTHCNAGALATVDYGTALGVIRAAMESGKRIRVFADETRPYLQGARLTAWELMKDGIEVYVITDNMAGWLMKKGLIDAVVVGADRIALNGDTANKIGTYSLAVLAKRNNIPFYVAAPVSTIDPTIKSGEEIPIEERRPEEVTHCGGNRIAPEGVKVLNPAFDVTENTLITAIITEKGVIRPPFEENIKKILGV</sequence>